<evidence type="ECO:0000255" key="1">
    <source>
        <dbReference type="HAMAP-Rule" id="MF_00440"/>
    </source>
</evidence>
<feature type="chain" id="PRO_0000182303" description="Transcriptional repressor NrdR">
    <location>
        <begin position="1"/>
        <end position="149"/>
    </location>
</feature>
<feature type="domain" description="ATP-cone" evidence="1">
    <location>
        <begin position="49"/>
        <end position="139"/>
    </location>
</feature>
<feature type="zinc finger region" evidence="1">
    <location>
        <begin position="3"/>
        <end position="34"/>
    </location>
</feature>
<gene>
    <name evidence="1" type="primary">nrdR</name>
    <name type="ordered locus">HD_1374</name>
</gene>
<keyword id="KW-0067">ATP-binding</keyword>
<keyword id="KW-0238">DNA-binding</keyword>
<keyword id="KW-0479">Metal-binding</keyword>
<keyword id="KW-0547">Nucleotide-binding</keyword>
<keyword id="KW-1185">Reference proteome</keyword>
<keyword id="KW-0678">Repressor</keyword>
<keyword id="KW-0804">Transcription</keyword>
<keyword id="KW-0805">Transcription regulation</keyword>
<keyword id="KW-0862">Zinc</keyword>
<keyword id="KW-0863">Zinc-finger</keyword>
<dbReference type="EMBL" id="AE017143">
    <property type="protein sequence ID" value="AAP96187.1"/>
    <property type="molecule type" value="Genomic_DNA"/>
</dbReference>
<dbReference type="RefSeq" id="WP_010945236.1">
    <property type="nucleotide sequence ID" value="NC_002940.2"/>
</dbReference>
<dbReference type="SMR" id="Q7VLP8"/>
<dbReference type="STRING" id="233412.HD_1374"/>
<dbReference type="GeneID" id="60732731"/>
<dbReference type="KEGG" id="hdu:HD_1374"/>
<dbReference type="eggNOG" id="COG1327">
    <property type="taxonomic scope" value="Bacteria"/>
</dbReference>
<dbReference type="HOGENOM" id="CLU_108412_0_0_6"/>
<dbReference type="OrthoDB" id="9807461at2"/>
<dbReference type="Proteomes" id="UP000001022">
    <property type="component" value="Chromosome"/>
</dbReference>
<dbReference type="GO" id="GO:0005524">
    <property type="term" value="F:ATP binding"/>
    <property type="evidence" value="ECO:0007669"/>
    <property type="project" value="UniProtKB-KW"/>
</dbReference>
<dbReference type="GO" id="GO:0003677">
    <property type="term" value="F:DNA binding"/>
    <property type="evidence" value="ECO:0007669"/>
    <property type="project" value="UniProtKB-KW"/>
</dbReference>
<dbReference type="GO" id="GO:0008270">
    <property type="term" value="F:zinc ion binding"/>
    <property type="evidence" value="ECO:0007669"/>
    <property type="project" value="UniProtKB-UniRule"/>
</dbReference>
<dbReference type="GO" id="GO:0045892">
    <property type="term" value="P:negative regulation of DNA-templated transcription"/>
    <property type="evidence" value="ECO:0007669"/>
    <property type="project" value="UniProtKB-UniRule"/>
</dbReference>
<dbReference type="HAMAP" id="MF_00440">
    <property type="entry name" value="NrdR"/>
    <property type="match status" value="1"/>
</dbReference>
<dbReference type="InterPro" id="IPR005144">
    <property type="entry name" value="ATP-cone_dom"/>
</dbReference>
<dbReference type="InterPro" id="IPR055173">
    <property type="entry name" value="NrdR-like_N"/>
</dbReference>
<dbReference type="InterPro" id="IPR003796">
    <property type="entry name" value="RNR_NrdR-like"/>
</dbReference>
<dbReference type="NCBIfam" id="TIGR00244">
    <property type="entry name" value="transcriptional regulator NrdR"/>
    <property type="match status" value="1"/>
</dbReference>
<dbReference type="PANTHER" id="PTHR30455">
    <property type="entry name" value="TRANSCRIPTIONAL REPRESSOR NRDR"/>
    <property type="match status" value="1"/>
</dbReference>
<dbReference type="PANTHER" id="PTHR30455:SF2">
    <property type="entry name" value="TRANSCRIPTIONAL REPRESSOR NRDR"/>
    <property type="match status" value="1"/>
</dbReference>
<dbReference type="Pfam" id="PF03477">
    <property type="entry name" value="ATP-cone"/>
    <property type="match status" value="1"/>
</dbReference>
<dbReference type="Pfam" id="PF22811">
    <property type="entry name" value="Zn_ribbon_NrdR"/>
    <property type="match status" value="1"/>
</dbReference>
<dbReference type="PROSITE" id="PS51161">
    <property type="entry name" value="ATP_CONE"/>
    <property type="match status" value="1"/>
</dbReference>
<reference key="1">
    <citation type="submission" date="2003-06" db="EMBL/GenBank/DDBJ databases">
        <title>The complete genome sequence of Haemophilus ducreyi.</title>
        <authorList>
            <person name="Munson R.S. Jr."/>
            <person name="Ray W.C."/>
            <person name="Mahairas G."/>
            <person name="Sabo P."/>
            <person name="Mungur R."/>
            <person name="Johnson L."/>
            <person name="Nguyen D."/>
            <person name="Wang J."/>
            <person name="Forst C."/>
            <person name="Hood L."/>
        </authorList>
    </citation>
    <scope>NUCLEOTIDE SEQUENCE [LARGE SCALE GENOMIC DNA]</scope>
    <source>
        <strain>35000HP / ATCC 700724</strain>
    </source>
</reference>
<proteinExistence type="inferred from homology"/>
<protein>
    <recommendedName>
        <fullName evidence="1">Transcriptional repressor NrdR</fullName>
    </recommendedName>
</protein>
<sequence length="149" mass="17185">MRCPFCTAEETKVIDSRLAADGYQIRRRRECIGCKERFTTFESAELALPYIIKNNGNREPFDLNKLEVSLNRALEKRPVHADDVDNVISKIIFQLKALGEREVPSKSVGHLAMDGLKQLDKVAYIRFASVYLSFDDIEEFTKEIEKLRE</sequence>
<comment type="function">
    <text evidence="1">Negatively regulates transcription of bacterial ribonucleotide reductase nrd genes and operons by binding to NrdR-boxes.</text>
</comment>
<comment type="cofactor">
    <cofactor evidence="1">
        <name>Zn(2+)</name>
        <dbReference type="ChEBI" id="CHEBI:29105"/>
    </cofactor>
    <text evidence="1">Binds 1 zinc ion.</text>
</comment>
<comment type="similarity">
    <text evidence="1">Belongs to the NrdR family.</text>
</comment>
<organism>
    <name type="scientific">Haemophilus ducreyi (strain 35000HP / ATCC 700724)</name>
    <dbReference type="NCBI Taxonomy" id="233412"/>
    <lineage>
        <taxon>Bacteria</taxon>
        <taxon>Pseudomonadati</taxon>
        <taxon>Pseudomonadota</taxon>
        <taxon>Gammaproteobacteria</taxon>
        <taxon>Pasteurellales</taxon>
        <taxon>Pasteurellaceae</taxon>
        <taxon>Haemophilus</taxon>
    </lineage>
</organism>
<name>NRDR_HAEDU</name>
<accession>Q7VLP8</accession>